<name>RL36_BORT9</name>
<gene>
    <name evidence="1" type="primary">rpmJ</name>
    <name type="ordered locus">BT0499</name>
</gene>
<feature type="chain" id="PRO_1000196170" description="Large ribosomal subunit protein bL36">
    <location>
        <begin position="1"/>
        <end position="37"/>
    </location>
</feature>
<organism>
    <name type="scientific">Borrelia turicatae (strain 91E135)</name>
    <dbReference type="NCBI Taxonomy" id="314724"/>
    <lineage>
        <taxon>Bacteria</taxon>
        <taxon>Pseudomonadati</taxon>
        <taxon>Spirochaetota</taxon>
        <taxon>Spirochaetia</taxon>
        <taxon>Spirochaetales</taxon>
        <taxon>Borreliaceae</taxon>
        <taxon>Borrelia</taxon>
    </lineage>
</organism>
<sequence length="37" mass="4405">MKVRVSVKPICEKCKVIKRKGVLRIICDNLKHKQRQK</sequence>
<reference key="1">
    <citation type="submission" date="2004-12" db="EMBL/GenBank/DDBJ databases">
        <title>The genome sequence of Borrelia hermsii and Borrelia turicatae: comparative analysis of two agents of endemic N. America relapsing fever.</title>
        <authorList>
            <person name="Porcella S.F."/>
            <person name="Raffel S.J."/>
            <person name="Schrumpf M.E."/>
            <person name="Montgomery B."/>
            <person name="Smith T."/>
            <person name="Schwan T.G."/>
        </authorList>
    </citation>
    <scope>NUCLEOTIDE SEQUENCE [LARGE SCALE GENOMIC DNA]</scope>
    <source>
        <strain>91E135</strain>
    </source>
</reference>
<protein>
    <recommendedName>
        <fullName evidence="1">Large ribosomal subunit protein bL36</fullName>
    </recommendedName>
    <alternativeName>
        <fullName evidence="2">50S ribosomal protein L36</fullName>
    </alternativeName>
</protein>
<proteinExistence type="inferred from homology"/>
<comment type="similarity">
    <text evidence="1">Belongs to the bacterial ribosomal protein bL36 family.</text>
</comment>
<dbReference type="EMBL" id="CP000049">
    <property type="protein sequence ID" value="AAX17827.1"/>
    <property type="molecule type" value="Genomic_DNA"/>
</dbReference>
<dbReference type="RefSeq" id="WP_002557090.1">
    <property type="nucleotide sequence ID" value="NZ_CP073176.1"/>
</dbReference>
<dbReference type="SMR" id="A1QZT5"/>
<dbReference type="GeneID" id="71843317"/>
<dbReference type="KEGG" id="btu:BT0499"/>
<dbReference type="eggNOG" id="COG0257">
    <property type="taxonomic scope" value="Bacteria"/>
</dbReference>
<dbReference type="HOGENOM" id="CLU_135723_6_2_12"/>
<dbReference type="Proteomes" id="UP000001205">
    <property type="component" value="Chromosome"/>
</dbReference>
<dbReference type="GO" id="GO:0005737">
    <property type="term" value="C:cytoplasm"/>
    <property type="evidence" value="ECO:0007669"/>
    <property type="project" value="UniProtKB-ARBA"/>
</dbReference>
<dbReference type="GO" id="GO:1990904">
    <property type="term" value="C:ribonucleoprotein complex"/>
    <property type="evidence" value="ECO:0007669"/>
    <property type="project" value="UniProtKB-KW"/>
</dbReference>
<dbReference type="GO" id="GO:0005840">
    <property type="term" value="C:ribosome"/>
    <property type="evidence" value="ECO:0007669"/>
    <property type="project" value="UniProtKB-KW"/>
</dbReference>
<dbReference type="GO" id="GO:0003735">
    <property type="term" value="F:structural constituent of ribosome"/>
    <property type="evidence" value="ECO:0007669"/>
    <property type="project" value="InterPro"/>
</dbReference>
<dbReference type="GO" id="GO:0006412">
    <property type="term" value="P:translation"/>
    <property type="evidence" value="ECO:0007669"/>
    <property type="project" value="UniProtKB-UniRule"/>
</dbReference>
<dbReference type="HAMAP" id="MF_00251">
    <property type="entry name" value="Ribosomal_bL36"/>
    <property type="match status" value="1"/>
</dbReference>
<dbReference type="InterPro" id="IPR000473">
    <property type="entry name" value="Ribosomal_bL36"/>
</dbReference>
<dbReference type="InterPro" id="IPR035977">
    <property type="entry name" value="Ribosomal_bL36_sp"/>
</dbReference>
<dbReference type="NCBIfam" id="TIGR01022">
    <property type="entry name" value="rpmJ_bact"/>
    <property type="match status" value="1"/>
</dbReference>
<dbReference type="PANTHER" id="PTHR42888">
    <property type="entry name" value="50S RIBOSOMAL PROTEIN L36, CHLOROPLASTIC"/>
    <property type="match status" value="1"/>
</dbReference>
<dbReference type="PANTHER" id="PTHR42888:SF1">
    <property type="entry name" value="LARGE RIBOSOMAL SUBUNIT PROTEIN BL36C"/>
    <property type="match status" value="1"/>
</dbReference>
<dbReference type="Pfam" id="PF00444">
    <property type="entry name" value="Ribosomal_L36"/>
    <property type="match status" value="1"/>
</dbReference>
<dbReference type="SUPFAM" id="SSF57840">
    <property type="entry name" value="Ribosomal protein L36"/>
    <property type="match status" value="1"/>
</dbReference>
<dbReference type="PROSITE" id="PS00828">
    <property type="entry name" value="RIBOSOMAL_L36"/>
    <property type="match status" value="1"/>
</dbReference>
<evidence type="ECO:0000255" key="1">
    <source>
        <dbReference type="HAMAP-Rule" id="MF_00251"/>
    </source>
</evidence>
<evidence type="ECO:0000305" key="2"/>
<accession>A1QZT5</accession>
<keyword id="KW-1185">Reference proteome</keyword>
<keyword id="KW-0687">Ribonucleoprotein</keyword>
<keyword id="KW-0689">Ribosomal protein</keyword>